<proteinExistence type="inferred from homology"/>
<accession>P45825</accession>
<keyword id="KW-0066">ATP synthesis</keyword>
<keyword id="KW-0067">ATP-binding</keyword>
<keyword id="KW-1003">Cell membrane</keyword>
<keyword id="KW-0139">CF(1)</keyword>
<keyword id="KW-0375">Hydrogen ion transport</keyword>
<keyword id="KW-0406">Ion transport</keyword>
<keyword id="KW-0472">Membrane</keyword>
<keyword id="KW-0547">Nucleotide-binding</keyword>
<keyword id="KW-1185">Reference proteome</keyword>
<keyword id="KW-1278">Translocase</keyword>
<keyword id="KW-0813">Transport</keyword>
<comment type="function">
    <text evidence="1">Produces ATP from ADP in the presence of a proton gradient across the membrane. The alpha chain is a regulatory subunit.</text>
</comment>
<comment type="catalytic activity">
    <reaction evidence="1">
        <text>ATP + H2O + 4 H(+)(in) = ADP + phosphate + 5 H(+)(out)</text>
        <dbReference type="Rhea" id="RHEA:57720"/>
        <dbReference type="ChEBI" id="CHEBI:15377"/>
        <dbReference type="ChEBI" id="CHEBI:15378"/>
        <dbReference type="ChEBI" id="CHEBI:30616"/>
        <dbReference type="ChEBI" id="CHEBI:43474"/>
        <dbReference type="ChEBI" id="CHEBI:456216"/>
        <dbReference type="EC" id="7.1.2.2"/>
    </reaction>
</comment>
<comment type="subunit">
    <text evidence="1">F-type ATPases have 2 components, CF(1) - the catalytic core - and CF(0) - the membrane proton channel. CF(1) has five subunits: alpha(3), beta(3), gamma(1), delta(1), epsilon(1). CF(0) has three main subunits: a(1), b(2) and c(9-12). The alpha and beta chains form an alternating ring which encloses part of the gamma chain. CF(1) is attached to CF(0) by a central stalk formed by the gamma and epsilon chains, while a peripheral stalk is formed by the delta and b chains.</text>
</comment>
<comment type="subcellular location">
    <subcellularLocation>
        <location evidence="1">Cell membrane</location>
        <topology evidence="1">Peripheral membrane protein</topology>
    </subcellularLocation>
</comment>
<comment type="similarity">
    <text evidence="1">Belongs to the ATPase alpha/beta chains family.</text>
</comment>
<organism>
    <name type="scientific">Mycobacterium leprae (strain TN)</name>
    <dbReference type="NCBI Taxonomy" id="272631"/>
    <lineage>
        <taxon>Bacteria</taxon>
        <taxon>Bacillati</taxon>
        <taxon>Actinomycetota</taxon>
        <taxon>Actinomycetes</taxon>
        <taxon>Mycobacteriales</taxon>
        <taxon>Mycobacteriaceae</taxon>
        <taxon>Mycobacterium</taxon>
    </lineage>
</organism>
<gene>
    <name evidence="1" type="primary">atpA</name>
    <name type="ordered locus">ML1143</name>
</gene>
<dbReference type="EC" id="7.1.2.2" evidence="1"/>
<dbReference type="EMBL" id="U15186">
    <property type="protein sequence ID" value="AAA63109.1"/>
    <property type="molecule type" value="Genomic_DNA"/>
</dbReference>
<dbReference type="EMBL" id="AL583920">
    <property type="protein sequence ID" value="CAC31524.1"/>
    <property type="molecule type" value="Genomic_DNA"/>
</dbReference>
<dbReference type="PIR" id="T09976">
    <property type="entry name" value="T09976"/>
</dbReference>
<dbReference type="RefSeq" id="NP_301837.1">
    <property type="nucleotide sequence ID" value="NC_002677.1"/>
</dbReference>
<dbReference type="RefSeq" id="WP_010908161.1">
    <property type="nucleotide sequence ID" value="NC_002677.1"/>
</dbReference>
<dbReference type="SMR" id="P45825"/>
<dbReference type="STRING" id="272631.gene:17574970"/>
<dbReference type="KEGG" id="mle:ML1143"/>
<dbReference type="PATRIC" id="fig|272631.5.peg.2065"/>
<dbReference type="Leproma" id="ML1143"/>
<dbReference type="eggNOG" id="COG0056">
    <property type="taxonomic scope" value="Bacteria"/>
</dbReference>
<dbReference type="HOGENOM" id="CLU_010091_2_1_11"/>
<dbReference type="OrthoDB" id="9803053at2"/>
<dbReference type="Proteomes" id="UP000000806">
    <property type="component" value="Chromosome"/>
</dbReference>
<dbReference type="GO" id="GO:0005886">
    <property type="term" value="C:plasma membrane"/>
    <property type="evidence" value="ECO:0007669"/>
    <property type="project" value="UniProtKB-SubCell"/>
</dbReference>
<dbReference type="GO" id="GO:0045259">
    <property type="term" value="C:proton-transporting ATP synthase complex"/>
    <property type="evidence" value="ECO:0007669"/>
    <property type="project" value="UniProtKB-KW"/>
</dbReference>
<dbReference type="GO" id="GO:0043531">
    <property type="term" value="F:ADP binding"/>
    <property type="evidence" value="ECO:0007669"/>
    <property type="project" value="TreeGrafter"/>
</dbReference>
<dbReference type="GO" id="GO:0005524">
    <property type="term" value="F:ATP binding"/>
    <property type="evidence" value="ECO:0007669"/>
    <property type="project" value="UniProtKB-UniRule"/>
</dbReference>
<dbReference type="GO" id="GO:0046933">
    <property type="term" value="F:proton-transporting ATP synthase activity, rotational mechanism"/>
    <property type="evidence" value="ECO:0007669"/>
    <property type="project" value="UniProtKB-UniRule"/>
</dbReference>
<dbReference type="CDD" id="cd18113">
    <property type="entry name" value="ATP-synt_F1_alpha_C"/>
    <property type="match status" value="1"/>
</dbReference>
<dbReference type="CDD" id="cd18116">
    <property type="entry name" value="ATP-synt_F1_alpha_N"/>
    <property type="match status" value="1"/>
</dbReference>
<dbReference type="CDD" id="cd01132">
    <property type="entry name" value="F1-ATPase_alpha_CD"/>
    <property type="match status" value="1"/>
</dbReference>
<dbReference type="FunFam" id="1.20.150.20:FF:000001">
    <property type="entry name" value="ATP synthase subunit alpha"/>
    <property type="match status" value="1"/>
</dbReference>
<dbReference type="FunFam" id="2.40.30.20:FF:000001">
    <property type="entry name" value="ATP synthase subunit alpha"/>
    <property type="match status" value="1"/>
</dbReference>
<dbReference type="FunFam" id="3.40.50.300:FF:000002">
    <property type="entry name" value="ATP synthase subunit alpha"/>
    <property type="match status" value="1"/>
</dbReference>
<dbReference type="Gene3D" id="2.40.30.20">
    <property type="match status" value="1"/>
</dbReference>
<dbReference type="Gene3D" id="1.20.150.20">
    <property type="entry name" value="ATP synthase alpha/beta chain, C-terminal domain"/>
    <property type="match status" value="1"/>
</dbReference>
<dbReference type="Gene3D" id="3.40.50.300">
    <property type="entry name" value="P-loop containing nucleotide triphosphate hydrolases"/>
    <property type="match status" value="1"/>
</dbReference>
<dbReference type="HAMAP" id="MF_01346">
    <property type="entry name" value="ATP_synth_alpha_bact"/>
    <property type="match status" value="1"/>
</dbReference>
<dbReference type="InterPro" id="IPR023366">
    <property type="entry name" value="ATP_synth_asu-like_sf"/>
</dbReference>
<dbReference type="InterPro" id="IPR000793">
    <property type="entry name" value="ATP_synth_asu_C"/>
</dbReference>
<dbReference type="InterPro" id="IPR038376">
    <property type="entry name" value="ATP_synth_asu_C_sf"/>
</dbReference>
<dbReference type="InterPro" id="IPR033732">
    <property type="entry name" value="ATP_synth_F1_a_nt-bd_dom"/>
</dbReference>
<dbReference type="InterPro" id="IPR005294">
    <property type="entry name" value="ATP_synth_F1_asu"/>
</dbReference>
<dbReference type="InterPro" id="IPR020003">
    <property type="entry name" value="ATPase_a/bsu_AS"/>
</dbReference>
<dbReference type="InterPro" id="IPR004100">
    <property type="entry name" value="ATPase_F1/V1/A1_a/bsu_N"/>
</dbReference>
<dbReference type="InterPro" id="IPR036121">
    <property type="entry name" value="ATPase_F1/V1/A1_a/bsu_N_sf"/>
</dbReference>
<dbReference type="InterPro" id="IPR000194">
    <property type="entry name" value="ATPase_F1/V1/A1_a/bsu_nucl-bd"/>
</dbReference>
<dbReference type="InterPro" id="IPR027417">
    <property type="entry name" value="P-loop_NTPase"/>
</dbReference>
<dbReference type="NCBIfam" id="TIGR00962">
    <property type="entry name" value="atpA"/>
    <property type="match status" value="1"/>
</dbReference>
<dbReference type="NCBIfam" id="NF009884">
    <property type="entry name" value="PRK13343.1"/>
    <property type="match status" value="1"/>
</dbReference>
<dbReference type="PANTHER" id="PTHR48082">
    <property type="entry name" value="ATP SYNTHASE SUBUNIT ALPHA, MITOCHONDRIAL"/>
    <property type="match status" value="1"/>
</dbReference>
<dbReference type="PANTHER" id="PTHR48082:SF2">
    <property type="entry name" value="ATP SYNTHASE SUBUNIT ALPHA, MITOCHONDRIAL"/>
    <property type="match status" value="1"/>
</dbReference>
<dbReference type="Pfam" id="PF00006">
    <property type="entry name" value="ATP-synt_ab"/>
    <property type="match status" value="1"/>
</dbReference>
<dbReference type="Pfam" id="PF00306">
    <property type="entry name" value="ATP-synt_ab_C"/>
    <property type="match status" value="1"/>
</dbReference>
<dbReference type="Pfam" id="PF02874">
    <property type="entry name" value="ATP-synt_ab_N"/>
    <property type="match status" value="1"/>
</dbReference>
<dbReference type="PIRSF" id="PIRSF039088">
    <property type="entry name" value="F_ATPase_subunit_alpha"/>
    <property type="match status" value="1"/>
</dbReference>
<dbReference type="SUPFAM" id="SSF47917">
    <property type="entry name" value="C-terminal domain of alpha and beta subunits of F1 ATP synthase"/>
    <property type="match status" value="1"/>
</dbReference>
<dbReference type="SUPFAM" id="SSF50615">
    <property type="entry name" value="N-terminal domain of alpha and beta subunits of F1 ATP synthase"/>
    <property type="match status" value="1"/>
</dbReference>
<dbReference type="SUPFAM" id="SSF52540">
    <property type="entry name" value="P-loop containing nucleoside triphosphate hydrolases"/>
    <property type="match status" value="1"/>
</dbReference>
<dbReference type="PROSITE" id="PS00152">
    <property type="entry name" value="ATPASE_ALPHA_BETA"/>
    <property type="match status" value="1"/>
</dbReference>
<protein>
    <recommendedName>
        <fullName evidence="1">ATP synthase subunit alpha</fullName>
        <ecNumber evidence="1">7.1.2.2</ecNumber>
    </recommendedName>
    <alternativeName>
        <fullName evidence="1">ATP synthase F1 sector subunit alpha</fullName>
    </alternativeName>
    <alternativeName>
        <fullName evidence="1">F-ATPase subunit alpha</fullName>
    </alternativeName>
</protein>
<name>ATPA_MYCLE</name>
<reference key="1">
    <citation type="submission" date="1994-09" db="EMBL/GenBank/DDBJ databases">
        <authorList>
            <person name="Smith D.R."/>
            <person name="Robison K."/>
        </authorList>
    </citation>
    <scope>NUCLEOTIDE SEQUENCE [GENOMIC DNA]</scope>
</reference>
<reference key="2">
    <citation type="journal article" date="2001" name="Nature">
        <title>Massive gene decay in the leprosy bacillus.</title>
        <authorList>
            <person name="Cole S.T."/>
            <person name="Eiglmeier K."/>
            <person name="Parkhill J."/>
            <person name="James K.D."/>
            <person name="Thomson N.R."/>
            <person name="Wheeler P.R."/>
            <person name="Honore N."/>
            <person name="Garnier T."/>
            <person name="Churcher C.M."/>
            <person name="Harris D.E."/>
            <person name="Mungall K.L."/>
            <person name="Basham D."/>
            <person name="Brown D."/>
            <person name="Chillingworth T."/>
            <person name="Connor R."/>
            <person name="Davies R.M."/>
            <person name="Devlin K."/>
            <person name="Duthoy S."/>
            <person name="Feltwell T."/>
            <person name="Fraser A."/>
            <person name="Hamlin N."/>
            <person name="Holroyd S."/>
            <person name="Hornsby T."/>
            <person name="Jagels K."/>
            <person name="Lacroix C."/>
            <person name="Maclean J."/>
            <person name="Moule S."/>
            <person name="Murphy L.D."/>
            <person name="Oliver K."/>
            <person name="Quail M.A."/>
            <person name="Rajandream M.A."/>
            <person name="Rutherford K.M."/>
            <person name="Rutter S."/>
            <person name="Seeger K."/>
            <person name="Simon S."/>
            <person name="Simmonds M."/>
            <person name="Skelton J."/>
            <person name="Squares R."/>
            <person name="Squares S."/>
            <person name="Stevens K."/>
            <person name="Taylor K."/>
            <person name="Whitehead S."/>
            <person name="Woodward J.R."/>
            <person name="Barrell B.G."/>
        </authorList>
    </citation>
    <scope>NUCLEOTIDE SEQUENCE [LARGE SCALE GENOMIC DNA]</scope>
    <source>
        <strain>TN</strain>
    </source>
</reference>
<feature type="chain" id="PRO_0000144336" description="ATP synthase subunit alpha">
    <location>
        <begin position="1"/>
        <end position="558"/>
    </location>
</feature>
<feature type="region of interest" description="Disordered" evidence="2">
    <location>
        <begin position="536"/>
        <end position="558"/>
    </location>
</feature>
<feature type="compositionally biased region" description="Basic and acidic residues" evidence="2">
    <location>
        <begin position="548"/>
        <end position="558"/>
    </location>
</feature>
<feature type="binding site" evidence="1">
    <location>
        <begin position="172"/>
        <end position="179"/>
    </location>
    <ligand>
        <name>ATP</name>
        <dbReference type="ChEBI" id="CHEBI:30616"/>
    </ligand>
</feature>
<feature type="site" description="Required for activity">
    <location>
        <position position="373"/>
    </location>
</feature>
<evidence type="ECO:0000255" key="1">
    <source>
        <dbReference type="HAMAP-Rule" id="MF_01346"/>
    </source>
</evidence>
<evidence type="ECO:0000256" key="2">
    <source>
        <dbReference type="SAM" id="MobiDB-lite"/>
    </source>
</evidence>
<sequence>MAELTISADDIQNAIEEYVSSFTADTFREEVGTVVDVGDSIAHVEGLPSVMTQELLEFPGGILGVALNLDEHNVGAVILGDFENIKEGQKVKRTGDVLSVPVGEAFMGRVVNPLGQPIDGRGDIEAEARRALELQAPSVVQRQSVKEPLQTGIKAIDAMTPIGRGQRQLVIGDRKTGKTAVCVDTILNQRQNWESGDPKRQVRCVYVAIGQKGTTIASVRRALEEGGAMDYTTIVAALASDSAGFKWLAPYTGSAIAQHWMYDGKHVLIVFDDLTKQAEAYRAISLLLRRPPGREAYPGDVFYLHSRLLERCAKLADHLGGGSLTGLPIIETKANDISAYIPTNVISITDGQCFLETDLFNQGVRPAINVGVSVSRVGGAAQIKAMKEVAGSLRLDLSQYRELEAFAAFASDLDATSKAQLERGARLVELLKQPQYQPMPVEEQVISLFLGTGGHLDSVPVGDVRRFETELLDHIRVAQEEILTEIRESQKLTDEAADSLTEVIKSFKKGFAATGGASVVPNEHVAALDEEKLDKESVKVHQAIPAKTSEKSKNSTPR</sequence>